<organism>
    <name type="scientific">Lachnospira eligens (strain ATCC 27750 / DSM 3376 / VPI C15-48 / C15-B4)</name>
    <name type="common">Eubacterium eligens</name>
    <dbReference type="NCBI Taxonomy" id="515620"/>
    <lineage>
        <taxon>Bacteria</taxon>
        <taxon>Bacillati</taxon>
        <taxon>Bacillota</taxon>
        <taxon>Clostridia</taxon>
        <taxon>Lachnospirales</taxon>
        <taxon>Lachnospiraceae</taxon>
        <taxon>Lachnospira</taxon>
    </lineage>
</organism>
<evidence type="ECO:0000255" key="1">
    <source>
        <dbReference type="HAMAP-Rule" id="MF_00198"/>
    </source>
</evidence>
<keyword id="KW-0963">Cytoplasm</keyword>
<keyword id="KW-0620">Polyamine biosynthesis</keyword>
<keyword id="KW-1185">Reference proteome</keyword>
<keyword id="KW-0745">Spermidine biosynthesis</keyword>
<keyword id="KW-0808">Transferase</keyword>
<protein>
    <recommendedName>
        <fullName evidence="1">Polyamine aminopropyltransferase</fullName>
    </recommendedName>
    <alternativeName>
        <fullName evidence="1">Putrescine aminopropyltransferase</fullName>
        <shortName evidence="1">PAPT</shortName>
    </alternativeName>
    <alternativeName>
        <fullName evidence="1">Spermidine synthase</fullName>
        <shortName evidence="1">SPDS</shortName>
        <shortName evidence="1">SPDSY</shortName>
        <ecNumber evidence="1">2.5.1.16</ecNumber>
    </alternativeName>
</protein>
<proteinExistence type="inferred from homology"/>
<comment type="function">
    <text evidence="1">Catalyzes the irreversible transfer of a propylamine group from the amino donor S-adenosylmethioninamine (decarboxy-AdoMet) to putrescine (1,4-diaminobutane) to yield spermidine.</text>
</comment>
<comment type="catalytic activity">
    <reaction evidence="1">
        <text>S-adenosyl 3-(methylsulfanyl)propylamine + putrescine = S-methyl-5'-thioadenosine + spermidine + H(+)</text>
        <dbReference type="Rhea" id="RHEA:12721"/>
        <dbReference type="ChEBI" id="CHEBI:15378"/>
        <dbReference type="ChEBI" id="CHEBI:17509"/>
        <dbReference type="ChEBI" id="CHEBI:57443"/>
        <dbReference type="ChEBI" id="CHEBI:57834"/>
        <dbReference type="ChEBI" id="CHEBI:326268"/>
        <dbReference type="EC" id="2.5.1.16"/>
    </reaction>
</comment>
<comment type="pathway">
    <text evidence="1">Amine and polyamine biosynthesis; spermidine biosynthesis; spermidine from putrescine: step 1/1.</text>
</comment>
<comment type="subunit">
    <text evidence="1">Homodimer or homotetramer.</text>
</comment>
<comment type="subcellular location">
    <subcellularLocation>
        <location evidence="1">Cytoplasm</location>
    </subcellularLocation>
</comment>
<comment type="similarity">
    <text evidence="1">Belongs to the spermidine/spermine synthase family.</text>
</comment>
<sequence length="285" mass="33360">MEFWFSELHSPHVKFDIRVEKQLFSGESDYQRIDVFQSPEFGKFLTLNGSVIFSEQDCFIYNEMVVHVPMSVHPDVKNVLIIGGGDGGVSKELLQYDNIENIDIVEQDNMFVDVCREYFPETASGLEDERVHIYNSDALRFLRSKQDMYDLIINDATDPFGASEGLFTREFYGNCYKALKEDGILVYQHGSPFYDEDEDACRSMHRKVFHTFPISRVYQAHIPTSPSGYWLFGFASKKYHPLKDFKPAEWKRRNIHTEYYTTNLHTGAFMLPKYVEELLEQEEER</sequence>
<accession>C4Z1Q7</accession>
<dbReference type="EC" id="2.5.1.16" evidence="1"/>
<dbReference type="EMBL" id="CP001104">
    <property type="protein sequence ID" value="ACR72418.1"/>
    <property type="molecule type" value="Genomic_DNA"/>
</dbReference>
<dbReference type="RefSeq" id="WP_012739653.1">
    <property type="nucleotide sequence ID" value="NC_012778.1"/>
</dbReference>
<dbReference type="SMR" id="C4Z1Q7"/>
<dbReference type="STRING" id="515620.EUBELI_01425"/>
<dbReference type="GeneID" id="41356128"/>
<dbReference type="KEGG" id="eel:EUBELI_01425"/>
<dbReference type="eggNOG" id="COG0421">
    <property type="taxonomic scope" value="Bacteria"/>
</dbReference>
<dbReference type="HOGENOM" id="CLU_048199_0_0_9"/>
<dbReference type="UniPathway" id="UPA00248">
    <property type="reaction ID" value="UER00314"/>
</dbReference>
<dbReference type="Proteomes" id="UP000001476">
    <property type="component" value="Chromosome"/>
</dbReference>
<dbReference type="GO" id="GO:0005829">
    <property type="term" value="C:cytosol"/>
    <property type="evidence" value="ECO:0007669"/>
    <property type="project" value="TreeGrafter"/>
</dbReference>
<dbReference type="GO" id="GO:0004766">
    <property type="term" value="F:spermidine synthase activity"/>
    <property type="evidence" value="ECO:0007669"/>
    <property type="project" value="UniProtKB-UniRule"/>
</dbReference>
<dbReference type="GO" id="GO:0008295">
    <property type="term" value="P:spermidine biosynthetic process"/>
    <property type="evidence" value="ECO:0007669"/>
    <property type="project" value="UniProtKB-UniRule"/>
</dbReference>
<dbReference type="CDD" id="cd02440">
    <property type="entry name" value="AdoMet_MTases"/>
    <property type="match status" value="1"/>
</dbReference>
<dbReference type="Gene3D" id="2.30.140.10">
    <property type="entry name" value="Spermidine synthase, tetramerisation domain"/>
    <property type="match status" value="1"/>
</dbReference>
<dbReference type="Gene3D" id="3.40.50.150">
    <property type="entry name" value="Vaccinia Virus protein VP39"/>
    <property type="match status" value="1"/>
</dbReference>
<dbReference type="HAMAP" id="MF_00198">
    <property type="entry name" value="Spermidine_synth"/>
    <property type="match status" value="1"/>
</dbReference>
<dbReference type="InterPro" id="IPR030374">
    <property type="entry name" value="PABS"/>
</dbReference>
<dbReference type="InterPro" id="IPR029063">
    <property type="entry name" value="SAM-dependent_MTases_sf"/>
</dbReference>
<dbReference type="InterPro" id="IPR001045">
    <property type="entry name" value="Spermi_synthase"/>
</dbReference>
<dbReference type="InterPro" id="IPR035246">
    <property type="entry name" value="Spermidine_synt_N"/>
</dbReference>
<dbReference type="InterPro" id="IPR037163">
    <property type="entry name" value="Spermidine_synt_N_sf"/>
</dbReference>
<dbReference type="NCBIfam" id="NF037959">
    <property type="entry name" value="MFS_SpdSyn"/>
    <property type="match status" value="1"/>
</dbReference>
<dbReference type="NCBIfam" id="NF002010">
    <property type="entry name" value="PRK00811.1"/>
    <property type="match status" value="1"/>
</dbReference>
<dbReference type="NCBIfam" id="TIGR00417">
    <property type="entry name" value="speE"/>
    <property type="match status" value="1"/>
</dbReference>
<dbReference type="PANTHER" id="PTHR11558:SF11">
    <property type="entry name" value="SPERMIDINE SYNTHASE"/>
    <property type="match status" value="1"/>
</dbReference>
<dbReference type="PANTHER" id="PTHR11558">
    <property type="entry name" value="SPERMIDINE/SPERMINE SYNTHASE"/>
    <property type="match status" value="1"/>
</dbReference>
<dbReference type="Pfam" id="PF17284">
    <property type="entry name" value="Spermine_synt_N"/>
    <property type="match status" value="1"/>
</dbReference>
<dbReference type="Pfam" id="PF01564">
    <property type="entry name" value="Spermine_synth"/>
    <property type="match status" value="1"/>
</dbReference>
<dbReference type="SUPFAM" id="SSF53335">
    <property type="entry name" value="S-adenosyl-L-methionine-dependent methyltransferases"/>
    <property type="match status" value="1"/>
</dbReference>
<dbReference type="PROSITE" id="PS51006">
    <property type="entry name" value="PABS_2"/>
    <property type="match status" value="1"/>
</dbReference>
<reference key="1">
    <citation type="journal article" date="2009" name="Proc. Natl. Acad. Sci. U.S.A.">
        <title>Characterizing a model human gut microbiota composed of members of its two dominant bacterial phyla.</title>
        <authorList>
            <person name="Mahowald M.A."/>
            <person name="Rey F.E."/>
            <person name="Seedorf H."/>
            <person name="Turnbaugh P.J."/>
            <person name="Fulton R.S."/>
            <person name="Wollam A."/>
            <person name="Shah N."/>
            <person name="Wang C."/>
            <person name="Magrini V."/>
            <person name="Wilson R.K."/>
            <person name="Cantarel B.L."/>
            <person name="Coutinho P.M."/>
            <person name="Henrissat B."/>
            <person name="Crock L.W."/>
            <person name="Russell A."/>
            <person name="Verberkmoes N.C."/>
            <person name="Hettich R.L."/>
            <person name="Gordon J.I."/>
        </authorList>
    </citation>
    <scope>NUCLEOTIDE SEQUENCE [LARGE SCALE GENOMIC DNA]</scope>
    <source>
        <strain>ATCC 27750 / DSM 3376 / VPI C15-48 / C15-B4</strain>
    </source>
</reference>
<name>SPEE_LACE2</name>
<gene>
    <name evidence="1" type="primary">speE</name>
    <name type="ordered locus">EUBELI_01425</name>
</gene>
<feature type="chain" id="PRO_1000204073" description="Polyamine aminopropyltransferase">
    <location>
        <begin position="1"/>
        <end position="285"/>
    </location>
</feature>
<feature type="domain" description="PABS" evidence="1">
    <location>
        <begin position="2"/>
        <end position="237"/>
    </location>
</feature>
<feature type="active site" description="Proton acceptor" evidence="1">
    <location>
        <position position="155"/>
    </location>
</feature>
<feature type="binding site" evidence="1">
    <location>
        <position position="31"/>
    </location>
    <ligand>
        <name>S-methyl-5'-thioadenosine</name>
        <dbReference type="ChEBI" id="CHEBI:17509"/>
    </ligand>
</feature>
<feature type="binding site" evidence="1">
    <location>
        <position position="86"/>
    </location>
    <ligand>
        <name>spermidine</name>
        <dbReference type="ChEBI" id="CHEBI:57834"/>
    </ligand>
</feature>
<feature type="binding site" evidence="1">
    <location>
        <position position="106"/>
    </location>
    <ligand>
        <name>S-methyl-5'-thioadenosine</name>
        <dbReference type="ChEBI" id="CHEBI:17509"/>
    </ligand>
</feature>
<feature type="binding site" evidence="1">
    <location>
        <begin position="137"/>
        <end position="138"/>
    </location>
    <ligand>
        <name>S-methyl-5'-thioadenosine</name>
        <dbReference type="ChEBI" id="CHEBI:17509"/>
    </ligand>
</feature>